<proteinExistence type="evidence at transcript level"/>
<keyword id="KW-0433">Leucine-rich repeat</keyword>
<keyword id="KW-1185">Reference proteome</keyword>
<keyword id="KW-0677">Repeat</keyword>
<comment type="sequence caution" evidence="1">
    <conflict type="erroneous initiation">
        <sequence resource="EMBL-CDS" id="AAZ52787"/>
    </conflict>
</comment>
<reference key="1">
    <citation type="journal article" date="1998" name="DNA Res.">
        <title>Structural analysis of Arabidopsis thaliana chromosome 5. VI. Sequence features of the regions of 1,367,185 bp covered by 19 physically assigned P1 and TAC clones.</title>
        <authorList>
            <person name="Kotani H."/>
            <person name="Nakamura Y."/>
            <person name="Sato S."/>
            <person name="Asamizu E."/>
            <person name="Kaneko T."/>
            <person name="Miyajima N."/>
            <person name="Tabata S."/>
        </authorList>
    </citation>
    <scope>NUCLEOTIDE SEQUENCE [LARGE SCALE GENOMIC DNA]</scope>
    <source>
        <strain>cv. Columbia</strain>
    </source>
</reference>
<reference key="2">
    <citation type="journal article" date="2017" name="Plant J.">
        <title>Araport11: a complete reannotation of the Arabidopsis thaliana reference genome.</title>
        <authorList>
            <person name="Cheng C.Y."/>
            <person name="Krishnakumar V."/>
            <person name="Chan A.P."/>
            <person name="Thibaud-Nissen F."/>
            <person name="Schobel S."/>
            <person name="Town C.D."/>
        </authorList>
    </citation>
    <scope>GENOME REANNOTATION</scope>
    <source>
        <strain>cv. Columbia</strain>
    </source>
</reference>
<reference key="3">
    <citation type="submission" date="2005-07" db="EMBL/GenBank/DDBJ databases">
        <title>Reconstruction of cDNA sequences for hypothetical genes in Arabidopsis thaliana from 5' and 3' RACE products.</title>
        <authorList>
            <person name="Xiao Y.-L."/>
            <person name="Underwood B.A."/>
            <person name="Moskal W.A. Jr."/>
            <person name="Redman J.C."/>
            <person name="Wang W."/>
            <person name="Monaghan E.L."/>
            <person name="Wu H.C."/>
            <person name="Utterback T."/>
            <person name="Town C.D."/>
        </authorList>
    </citation>
    <scope>NUCLEOTIDE SEQUENCE [LARGE SCALE MRNA] OF 10-439</scope>
    <source>
        <strain>cv. Columbia</strain>
    </source>
</reference>
<reference key="4">
    <citation type="journal article" date="2006" name="Plant Biotechnol. J.">
        <title>Simultaneous high-throughput recombinational cloning of open reading frames in closed and open configurations.</title>
        <authorList>
            <person name="Underwood B.A."/>
            <person name="Vanderhaeghen R."/>
            <person name="Whitford R."/>
            <person name="Town C.D."/>
            <person name="Hilson P."/>
        </authorList>
    </citation>
    <scope>NUCLEOTIDE SEQUENCE [LARGE SCALE MRNA] OF 23-439</scope>
    <source>
        <strain>cv. Columbia</strain>
    </source>
</reference>
<accession>Q9FJV1</accession>
<accession>Q45GE5</accession>
<dbReference type="EMBL" id="AB013392">
    <property type="protein sequence ID" value="BAB09874.1"/>
    <property type="molecule type" value="Genomic_DNA"/>
</dbReference>
<dbReference type="EMBL" id="CP002688">
    <property type="protein sequence ID" value="AED96782.1"/>
    <property type="molecule type" value="Genomic_DNA"/>
</dbReference>
<dbReference type="EMBL" id="DQ132757">
    <property type="protein sequence ID" value="AAZ52787.1"/>
    <property type="status" value="ALT_INIT"/>
    <property type="molecule type" value="mRNA"/>
</dbReference>
<dbReference type="EMBL" id="DQ492242">
    <property type="protein sequence ID" value="ABF59171.1"/>
    <property type="molecule type" value="mRNA"/>
</dbReference>
<dbReference type="RefSeq" id="NP_200468.1">
    <property type="nucleotide sequence ID" value="NM_125040.2"/>
</dbReference>
<dbReference type="SMR" id="Q9FJV1"/>
<dbReference type="PaxDb" id="3702-AT5G56570.1"/>
<dbReference type="EnsemblPlants" id="AT5G56570.1">
    <property type="protein sequence ID" value="AT5G56570.1"/>
    <property type="gene ID" value="AT5G56570"/>
</dbReference>
<dbReference type="GeneID" id="835758"/>
<dbReference type="Gramene" id="AT5G56570.1">
    <property type="protein sequence ID" value="AT5G56570.1"/>
    <property type="gene ID" value="AT5G56570"/>
</dbReference>
<dbReference type="KEGG" id="ath:AT5G56570"/>
<dbReference type="Araport" id="AT5G56570"/>
<dbReference type="TAIR" id="AT5G56570"/>
<dbReference type="eggNOG" id="ENOG502STUZ">
    <property type="taxonomic scope" value="Eukaryota"/>
</dbReference>
<dbReference type="HOGENOM" id="CLU_010721_1_2_1"/>
<dbReference type="InParanoid" id="Q9FJV1"/>
<dbReference type="OMA" id="YEGTEHE"/>
<dbReference type="PhylomeDB" id="Q9FJV1"/>
<dbReference type="PRO" id="PR:Q9FJV1"/>
<dbReference type="Proteomes" id="UP000006548">
    <property type="component" value="Chromosome 5"/>
</dbReference>
<dbReference type="ExpressionAtlas" id="Q9FJV1">
    <property type="expression patterns" value="baseline and differential"/>
</dbReference>
<dbReference type="Gene3D" id="3.80.10.10">
    <property type="entry name" value="Ribonuclease Inhibitor"/>
    <property type="match status" value="1"/>
</dbReference>
<dbReference type="InterPro" id="IPR006566">
    <property type="entry name" value="FBD"/>
</dbReference>
<dbReference type="InterPro" id="IPR050232">
    <property type="entry name" value="FBL13/AtMIF1-like"/>
</dbReference>
<dbReference type="InterPro" id="IPR032675">
    <property type="entry name" value="LRR_dom_sf"/>
</dbReference>
<dbReference type="PANTHER" id="PTHR31900:SF36">
    <property type="entry name" value="F-BOX DOMAIN-CONTAINING PROTEIN"/>
    <property type="match status" value="1"/>
</dbReference>
<dbReference type="PANTHER" id="PTHR31900">
    <property type="entry name" value="F-BOX/RNI SUPERFAMILY PROTEIN-RELATED"/>
    <property type="match status" value="1"/>
</dbReference>
<dbReference type="Pfam" id="PF08387">
    <property type="entry name" value="FBD"/>
    <property type="match status" value="1"/>
</dbReference>
<dbReference type="SMART" id="SM00579">
    <property type="entry name" value="FBD"/>
    <property type="match status" value="1"/>
</dbReference>
<dbReference type="SUPFAM" id="SSF52058">
    <property type="entry name" value="L domain-like"/>
    <property type="match status" value="1"/>
</dbReference>
<gene>
    <name type="ordered locus">At5g56570</name>
    <name type="ORF">MIK19.1</name>
</gene>
<protein>
    <recommendedName>
        <fullName>F-box/FBD/LRR-repeat protein At5g56570</fullName>
    </recommendedName>
</protein>
<name>FDL39_ARATH</name>
<feature type="chain" id="PRO_0000283131" description="F-box/FBD/LRR-repeat protein At5g56570">
    <location>
        <begin position="1"/>
        <end position="439"/>
    </location>
</feature>
<feature type="domain" description="F-box">
    <location>
        <begin position="35"/>
        <end position="81"/>
    </location>
</feature>
<feature type="repeat" description="LRR 1">
    <location>
        <begin position="155"/>
        <end position="177"/>
    </location>
</feature>
<feature type="repeat" description="LRR 2">
    <location>
        <begin position="223"/>
        <end position="246"/>
    </location>
</feature>
<feature type="domain" description="FBD">
    <location>
        <begin position="361"/>
        <end position="411"/>
    </location>
</feature>
<sequence>MRKLFFFLCTHVPKQRAKFTRIMESCQKKQKLETPTELSDMPDDLIFKIFSFLPFFKEDLATRFISEYGKGLWNPDPNAIFDDESLDMTCMSFVYGSLMSKDAQILDSLHLKLRKYYIASDINFLVQLGVNRSMRELRIDFFGKTLELPCCLSTCTTLKVLVLDHLNIMSVPGWFRLPSVETLQLSSVTGGSNYVPSLIRLCSVHERLVVDQNRNKDLVNINVPTLRSLSIDNKRRGHVPLGSFWINVPSLMFLNIKDTFQTIFESMPAMIKANIEVAHDQSQSVKFIESLTSTRHLCLCSPTSENPYPNGTKFSNLVHLKLCTCSAGWQNLLACMLNDAPNLRSLTLKLRQKSDVNPKKVWEKPTVVPECLSTRLEILKWRDYEGTEHEKDMVGYILANATFLQRATFSTKDRNQCDSRFSELQSMERVSEICEFVFD</sequence>
<evidence type="ECO:0000305" key="1"/>
<organism>
    <name type="scientific">Arabidopsis thaliana</name>
    <name type="common">Mouse-ear cress</name>
    <dbReference type="NCBI Taxonomy" id="3702"/>
    <lineage>
        <taxon>Eukaryota</taxon>
        <taxon>Viridiplantae</taxon>
        <taxon>Streptophyta</taxon>
        <taxon>Embryophyta</taxon>
        <taxon>Tracheophyta</taxon>
        <taxon>Spermatophyta</taxon>
        <taxon>Magnoliopsida</taxon>
        <taxon>eudicotyledons</taxon>
        <taxon>Gunneridae</taxon>
        <taxon>Pentapetalae</taxon>
        <taxon>rosids</taxon>
        <taxon>malvids</taxon>
        <taxon>Brassicales</taxon>
        <taxon>Brassicaceae</taxon>
        <taxon>Camelineae</taxon>
        <taxon>Arabidopsis</taxon>
    </lineage>
</organism>